<organism>
    <name type="scientific">Prochlorococcus marinus (strain NATL1A)</name>
    <dbReference type="NCBI Taxonomy" id="167555"/>
    <lineage>
        <taxon>Bacteria</taxon>
        <taxon>Bacillati</taxon>
        <taxon>Cyanobacteriota</taxon>
        <taxon>Cyanophyceae</taxon>
        <taxon>Synechococcales</taxon>
        <taxon>Prochlorococcaceae</taxon>
        <taxon>Prochlorococcus</taxon>
    </lineage>
</organism>
<reference key="1">
    <citation type="journal article" date="2007" name="PLoS Genet.">
        <title>Patterns and implications of gene gain and loss in the evolution of Prochlorococcus.</title>
        <authorList>
            <person name="Kettler G.C."/>
            <person name="Martiny A.C."/>
            <person name="Huang K."/>
            <person name="Zucker J."/>
            <person name="Coleman M.L."/>
            <person name="Rodrigue S."/>
            <person name="Chen F."/>
            <person name="Lapidus A."/>
            <person name="Ferriera S."/>
            <person name="Johnson J."/>
            <person name="Steglich C."/>
            <person name="Church G.M."/>
            <person name="Richardson P."/>
            <person name="Chisholm S.W."/>
        </authorList>
    </citation>
    <scope>NUCLEOTIDE SEQUENCE [LARGE SCALE GENOMIC DNA]</scope>
    <source>
        <strain>NATL1A</strain>
    </source>
</reference>
<evidence type="ECO:0000255" key="1">
    <source>
        <dbReference type="HAMAP-Rule" id="MF_00373"/>
    </source>
</evidence>
<evidence type="ECO:0000256" key="2">
    <source>
        <dbReference type="SAM" id="MobiDB-lite"/>
    </source>
</evidence>
<evidence type="ECO:0000305" key="3"/>
<proteinExistence type="inferred from homology"/>
<accession>A2C226</accession>
<gene>
    <name evidence="1" type="primary">rpmB</name>
    <name evidence="1" type="synonym">rpl28</name>
    <name type="ordered locus">NATL1_09781</name>
</gene>
<dbReference type="EMBL" id="CP000553">
    <property type="protein sequence ID" value="ABM75536.1"/>
    <property type="molecule type" value="Genomic_DNA"/>
</dbReference>
<dbReference type="RefSeq" id="WP_011293839.1">
    <property type="nucleotide sequence ID" value="NC_008819.1"/>
</dbReference>
<dbReference type="SMR" id="A2C226"/>
<dbReference type="KEGG" id="pme:NATL1_09781"/>
<dbReference type="eggNOG" id="COG0227">
    <property type="taxonomic scope" value="Bacteria"/>
</dbReference>
<dbReference type="HOGENOM" id="CLU_064548_3_0_3"/>
<dbReference type="Proteomes" id="UP000002592">
    <property type="component" value="Chromosome"/>
</dbReference>
<dbReference type="GO" id="GO:1990904">
    <property type="term" value="C:ribonucleoprotein complex"/>
    <property type="evidence" value="ECO:0007669"/>
    <property type="project" value="UniProtKB-KW"/>
</dbReference>
<dbReference type="GO" id="GO:0005840">
    <property type="term" value="C:ribosome"/>
    <property type="evidence" value="ECO:0007669"/>
    <property type="project" value="UniProtKB-KW"/>
</dbReference>
<dbReference type="GO" id="GO:0003735">
    <property type="term" value="F:structural constituent of ribosome"/>
    <property type="evidence" value="ECO:0007669"/>
    <property type="project" value="InterPro"/>
</dbReference>
<dbReference type="GO" id="GO:0006412">
    <property type="term" value="P:translation"/>
    <property type="evidence" value="ECO:0007669"/>
    <property type="project" value="UniProtKB-UniRule"/>
</dbReference>
<dbReference type="Gene3D" id="2.30.170.40">
    <property type="entry name" value="Ribosomal protein L28/L24"/>
    <property type="match status" value="1"/>
</dbReference>
<dbReference type="HAMAP" id="MF_00373">
    <property type="entry name" value="Ribosomal_bL28"/>
    <property type="match status" value="1"/>
</dbReference>
<dbReference type="InterPro" id="IPR026569">
    <property type="entry name" value="Ribosomal_bL28"/>
</dbReference>
<dbReference type="InterPro" id="IPR034704">
    <property type="entry name" value="Ribosomal_bL28/bL31-like_sf"/>
</dbReference>
<dbReference type="InterPro" id="IPR001383">
    <property type="entry name" value="Ribosomal_bL28_bact-type"/>
</dbReference>
<dbReference type="InterPro" id="IPR037147">
    <property type="entry name" value="Ribosomal_bL28_sf"/>
</dbReference>
<dbReference type="NCBIfam" id="TIGR00009">
    <property type="entry name" value="L28"/>
    <property type="match status" value="1"/>
</dbReference>
<dbReference type="PANTHER" id="PTHR13528">
    <property type="entry name" value="39S RIBOSOMAL PROTEIN L28, MITOCHONDRIAL"/>
    <property type="match status" value="1"/>
</dbReference>
<dbReference type="PANTHER" id="PTHR13528:SF2">
    <property type="entry name" value="LARGE RIBOSOMAL SUBUNIT PROTEIN BL28M"/>
    <property type="match status" value="1"/>
</dbReference>
<dbReference type="Pfam" id="PF00830">
    <property type="entry name" value="Ribosomal_L28"/>
    <property type="match status" value="1"/>
</dbReference>
<dbReference type="SUPFAM" id="SSF143800">
    <property type="entry name" value="L28p-like"/>
    <property type="match status" value="1"/>
</dbReference>
<comment type="similarity">
    <text evidence="1">Belongs to the bacterial ribosomal protein bL28 family.</text>
</comment>
<feature type="chain" id="PRO_1000007303" description="Large ribosomal subunit protein bL28">
    <location>
        <begin position="1"/>
        <end position="78"/>
    </location>
</feature>
<feature type="region of interest" description="Disordered" evidence="2">
    <location>
        <begin position="1"/>
        <end position="23"/>
    </location>
</feature>
<feature type="compositionally biased region" description="Polar residues" evidence="2">
    <location>
        <begin position="1"/>
        <end position="20"/>
    </location>
</feature>
<protein>
    <recommendedName>
        <fullName evidence="1">Large ribosomal subunit protein bL28</fullName>
    </recommendedName>
    <alternativeName>
        <fullName evidence="3">50S ribosomal protein L28</fullName>
    </alternativeName>
</protein>
<sequence>MSRVCQLTGTRANNGMSVSHSHIRTKKLQQANLQQRRLWWEEENKWINIRVTTRALKTIQKKGLGKYAKSLGVDLNKL</sequence>
<name>RL28_PROM1</name>
<keyword id="KW-0687">Ribonucleoprotein</keyword>
<keyword id="KW-0689">Ribosomal protein</keyword>